<keyword id="KW-0067">ATP-binding</keyword>
<keyword id="KW-0963">Cytoplasm</keyword>
<keyword id="KW-0227">DNA damage</keyword>
<keyword id="KW-0234">DNA repair</keyword>
<keyword id="KW-0235">DNA replication</keyword>
<keyword id="KW-0238">DNA-binding</keyword>
<keyword id="KW-0547">Nucleotide-binding</keyword>
<keyword id="KW-0742">SOS response</keyword>
<accession>Q68XQ6</accession>
<dbReference type="EMBL" id="AE017197">
    <property type="protein sequence ID" value="AAU03586.1"/>
    <property type="molecule type" value="Genomic_DNA"/>
</dbReference>
<dbReference type="RefSeq" id="WP_011190573.1">
    <property type="nucleotide sequence ID" value="NC_006142.1"/>
</dbReference>
<dbReference type="SMR" id="Q68XQ6"/>
<dbReference type="KEGG" id="rty:RT0100"/>
<dbReference type="eggNOG" id="COG1195">
    <property type="taxonomic scope" value="Bacteria"/>
</dbReference>
<dbReference type="HOGENOM" id="CLU_040267_2_0_5"/>
<dbReference type="OrthoDB" id="9803889at2"/>
<dbReference type="Proteomes" id="UP000000604">
    <property type="component" value="Chromosome"/>
</dbReference>
<dbReference type="GO" id="GO:0005737">
    <property type="term" value="C:cytoplasm"/>
    <property type="evidence" value="ECO:0007669"/>
    <property type="project" value="UniProtKB-SubCell"/>
</dbReference>
<dbReference type="GO" id="GO:0005524">
    <property type="term" value="F:ATP binding"/>
    <property type="evidence" value="ECO:0007669"/>
    <property type="project" value="UniProtKB-UniRule"/>
</dbReference>
<dbReference type="GO" id="GO:0003697">
    <property type="term" value="F:single-stranded DNA binding"/>
    <property type="evidence" value="ECO:0007669"/>
    <property type="project" value="UniProtKB-UniRule"/>
</dbReference>
<dbReference type="GO" id="GO:0006260">
    <property type="term" value="P:DNA replication"/>
    <property type="evidence" value="ECO:0007669"/>
    <property type="project" value="UniProtKB-UniRule"/>
</dbReference>
<dbReference type="GO" id="GO:0000731">
    <property type="term" value="P:DNA synthesis involved in DNA repair"/>
    <property type="evidence" value="ECO:0007669"/>
    <property type="project" value="TreeGrafter"/>
</dbReference>
<dbReference type="GO" id="GO:0006302">
    <property type="term" value="P:double-strand break repair"/>
    <property type="evidence" value="ECO:0007669"/>
    <property type="project" value="TreeGrafter"/>
</dbReference>
<dbReference type="GO" id="GO:0009432">
    <property type="term" value="P:SOS response"/>
    <property type="evidence" value="ECO:0007669"/>
    <property type="project" value="UniProtKB-UniRule"/>
</dbReference>
<dbReference type="Gene3D" id="3.40.50.300">
    <property type="entry name" value="P-loop containing nucleotide triphosphate hydrolases"/>
    <property type="match status" value="1"/>
</dbReference>
<dbReference type="Gene3D" id="1.20.1050.90">
    <property type="entry name" value="RecF/RecN/SMC, N-terminal domain"/>
    <property type="match status" value="1"/>
</dbReference>
<dbReference type="HAMAP" id="MF_00365">
    <property type="entry name" value="RecF"/>
    <property type="match status" value="1"/>
</dbReference>
<dbReference type="InterPro" id="IPR001238">
    <property type="entry name" value="DNA-binding_RecF"/>
</dbReference>
<dbReference type="InterPro" id="IPR018078">
    <property type="entry name" value="DNA-binding_RecF_CS"/>
</dbReference>
<dbReference type="InterPro" id="IPR027417">
    <property type="entry name" value="P-loop_NTPase"/>
</dbReference>
<dbReference type="InterPro" id="IPR003395">
    <property type="entry name" value="RecF/RecN/SMC_N"/>
</dbReference>
<dbReference type="InterPro" id="IPR042174">
    <property type="entry name" value="RecF_2"/>
</dbReference>
<dbReference type="NCBIfam" id="TIGR00611">
    <property type="entry name" value="recf"/>
    <property type="match status" value="1"/>
</dbReference>
<dbReference type="PANTHER" id="PTHR32182">
    <property type="entry name" value="DNA REPLICATION AND REPAIR PROTEIN RECF"/>
    <property type="match status" value="1"/>
</dbReference>
<dbReference type="PANTHER" id="PTHR32182:SF0">
    <property type="entry name" value="DNA REPLICATION AND REPAIR PROTEIN RECF"/>
    <property type="match status" value="1"/>
</dbReference>
<dbReference type="Pfam" id="PF02463">
    <property type="entry name" value="SMC_N"/>
    <property type="match status" value="1"/>
</dbReference>
<dbReference type="SUPFAM" id="SSF52540">
    <property type="entry name" value="P-loop containing nucleoside triphosphate hydrolases"/>
    <property type="match status" value="1"/>
</dbReference>
<dbReference type="PROSITE" id="PS00617">
    <property type="entry name" value="RECF_1"/>
    <property type="match status" value="1"/>
</dbReference>
<dbReference type="PROSITE" id="PS00618">
    <property type="entry name" value="RECF_2"/>
    <property type="match status" value="1"/>
</dbReference>
<comment type="function">
    <text evidence="1">The RecF protein is involved in DNA metabolism; it is required for DNA replication and normal SOS inducibility. RecF binds preferentially to single-stranded, linear DNA. It also seems to bind ATP.</text>
</comment>
<comment type="subcellular location">
    <subcellularLocation>
        <location evidence="1">Cytoplasm</location>
    </subcellularLocation>
</comment>
<comment type="similarity">
    <text evidence="1">Belongs to the RecF family.</text>
</comment>
<protein>
    <recommendedName>
        <fullName evidence="1">DNA replication and repair protein RecF</fullName>
    </recommendedName>
</protein>
<proteinExistence type="inferred from homology"/>
<name>RECF_RICTY</name>
<gene>
    <name evidence="1" type="primary">recF</name>
    <name type="ordered locus">RT0100</name>
</gene>
<evidence type="ECO:0000255" key="1">
    <source>
        <dbReference type="HAMAP-Rule" id="MF_00365"/>
    </source>
</evidence>
<organism>
    <name type="scientific">Rickettsia typhi (strain ATCC VR-144 / Wilmington)</name>
    <dbReference type="NCBI Taxonomy" id="257363"/>
    <lineage>
        <taxon>Bacteria</taxon>
        <taxon>Pseudomonadati</taxon>
        <taxon>Pseudomonadota</taxon>
        <taxon>Alphaproteobacteria</taxon>
        <taxon>Rickettsiales</taxon>
        <taxon>Rickettsiaceae</taxon>
        <taxon>Rickettsieae</taxon>
        <taxon>Rickettsia</taxon>
        <taxon>typhus group</taxon>
    </lineage>
</organism>
<feature type="chain" id="PRO_0000236139" description="DNA replication and repair protein RecF">
    <location>
        <begin position="1"/>
        <end position="360"/>
    </location>
</feature>
<feature type="binding site" evidence="1">
    <location>
        <begin position="33"/>
        <end position="40"/>
    </location>
    <ligand>
        <name>ATP</name>
        <dbReference type="ChEBI" id="CHEBI:30616"/>
    </ligand>
</feature>
<sequence length="360" mass="41725">MKNIFLHSLNLENYRNFKNLELKIDNIPIILTGENGSGKTNILEAISLFYPGRGLRSSKLTDICKTSEDYCRVKALLQSKLGIADFSTHIKRNSNRRITEYNASKIANNELSKFTSMVWLTPQMEGIFTSSSTDRRKFLDRIVYNFDTKHAELLNKYEYYMHERNKILAEDIRDNNWLKIIEENMANISNIIANNRLKTIRFMQQAIDEIENEFPKADLSIDGIIEQKILNVEEDIVSFIITELYQTRSKDKLLGRTSFGIHKSDFLVKHQKKNILAKFCSTGEQKAILIAIILAEMNSTIKLTKITPILLLDEIFVHLDDKRRQYLMDFFTALNIQLWVTATNLDGIENFANKAQLIKL</sequence>
<reference key="1">
    <citation type="journal article" date="2004" name="J. Bacteriol.">
        <title>Complete genome sequence of Rickettsia typhi and comparison with sequences of other Rickettsiae.</title>
        <authorList>
            <person name="McLeod M.P."/>
            <person name="Qin X."/>
            <person name="Karpathy S.E."/>
            <person name="Gioia J."/>
            <person name="Highlander S.K."/>
            <person name="Fox G.E."/>
            <person name="McNeill T.Z."/>
            <person name="Jiang H."/>
            <person name="Muzny D."/>
            <person name="Jacob L.S."/>
            <person name="Hawes A.C."/>
            <person name="Sodergren E."/>
            <person name="Gill R."/>
            <person name="Hume J."/>
            <person name="Morgan M."/>
            <person name="Fan G."/>
            <person name="Amin A.G."/>
            <person name="Gibbs R.A."/>
            <person name="Hong C."/>
            <person name="Yu X.-J."/>
            <person name="Walker D.H."/>
            <person name="Weinstock G.M."/>
        </authorList>
    </citation>
    <scope>NUCLEOTIDE SEQUENCE [LARGE SCALE GENOMIC DNA]</scope>
    <source>
        <strain>ATCC VR-144 / Wilmington</strain>
    </source>
</reference>